<feature type="chain" id="PRO_0000101453" description="Uncharacterized protein RC0116">
    <location>
        <begin position="1"/>
        <end position="63"/>
    </location>
</feature>
<organism>
    <name type="scientific">Rickettsia conorii (strain ATCC VR-613 / Malish 7)</name>
    <dbReference type="NCBI Taxonomy" id="272944"/>
    <lineage>
        <taxon>Bacteria</taxon>
        <taxon>Pseudomonadati</taxon>
        <taxon>Pseudomonadota</taxon>
        <taxon>Alphaproteobacteria</taxon>
        <taxon>Rickettsiales</taxon>
        <taxon>Rickettsiaceae</taxon>
        <taxon>Rickettsieae</taxon>
        <taxon>Rickettsia</taxon>
        <taxon>spotted fever group</taxon>
    </lineage>
</organism>
<sequence>MIFNSTGKEKFIFSEPTKLKVVQKEFKTENGYKCGIVLEETIEASLTLRLNNKRIVRLKNLEA</sequence>
<dbReference type="EMBL" id="AE006914">
    <property type="protein sequence ID" value="AAL02654.1"/>
    <property type="molecule type" value="Genomic_DNA"/>
</dbReference>
<dbReference type="PIR" id="D97714">
    <property type="entry name" value="D97714"/>
</dbReference>
<dbReference type="RefSeq" id="WP_010976796.1">
    <property type="nucleotide sequence ID" value="NC_003103.1"/>
</dbReference>
<dbReference type="GeneID" id="928079"/>
<dbReference type="KEGG" id="rco:RC0116"/>
<dbReference type="PATRIC" id="fig|272944.4.peg.137"/>
<dbReference type="HOGENOM" id="CLU_2883051_0_0_5"/>
<dbReference type="Proteomes" id="UP000000816">
    <property type="component" value="Chromosome"/>
</dbReference>
<accession>Q92JF1</accession>
<reference key="1">
    <citation type="journal article" date="2001" name="Science">
        <title>Mechanisms of evolution in Rickettsia conorii and R. prowazekii.</title>
        <authorList>
            <person name="Ogata H."/>
            <person name="Audic S."/>
            <person name="Renesto-Audiffren P."/>
            <person name="Fournier P.-E."/>
            <person name="Barbe V."/>
            <person name="Samson D."/>
            <person name="Roux V."/>
            <person name="Cossart P."/>
            <person name="Weissenbach J."/>
            <person name="Claverie J.-M."/>
            <person name="Raoult D."/>
        </authorList>
    </citation>
    <scope>NUCLEOTIDE SEQUENCE [LARGE SCALE GENOMIC DNA]</scope>
    <source>
        <strain>ATCC VR-613 / Malish 7</strain>
    </source>
</reference>
<gene>
    <name type="ordered locus">RC0116</name>
</gene>
<proteinExistence type="predicted"/>
<name>Y116_RICCN</name>
<protein>
    <recommendedName>
        <fullName>Uncharacterized protein RC0116</fullName>
    </recommendedName>
</protein>